<accession>P24858</accession>
<comment type="function">
    <text evidence="2">Regulation of fluid secretion.</text>
</comment>
<comment type="subcellular location">
    <subcellularLocation>
        <location evidence="2">Secreted</location>
    </subcellularLocation>
</comment>
<comment type="miscellaneous">
    <text evidence="1">Prolonged ingestion of diuretic hormone 2 by M.sexta neonates results in reduced food consumption, slowed growth and reduced developmental rates. A high percentage of neonates fail to molt into second instar larvae and death usually follows shortly thereafter, suggesting the possible use of this insecticidal peptide in plant protection.</text>
</comment>
<comment type="similarity">
    <text evidence="4">Belongs to the sauvagine/corticotropin-releasing factor/urotensin I family.</text>
</comment>
<proteinExistence type="evidence at protein level"/>
<evidence type="ECO:0000269" key="1">
    <source>
    </source>
</evidence>
<evidence type="ECO:0000269" key="2">
    <source>
    </source>
</evidence>
<evidence type="ECO:0000303" key="3">
    <source>
    </source>
</evidence>
<evidence type="ECO:0000305" key="4"/>
<organism>
    <name type="scientific">Manduca sexta</name>
    <name type="common">Tobacco hawkmoth</name>
    <name type="synonym">Tobacco hornworm</name>
    <dbReference type="NCBI Taxonomy" id="7130"/>
    <lineage>
        <taxon>Eukaryota</taxon>
        <taxon>Metazoa</taxon>
        <taxon>Ecdysozoa</taxon>
        <taxon>Arthropoda</taxon>
        <taxon>Hexapoda</taxon>
        <taxon>Insecta</taxon>
        <taxon>Pterygota</taxon>
        <taxon>Neoptera</taxon>
        <taxon>Endopterygota</taxon>
        <taxon>Lepidoptera</taxon>
        <taxon>Glossata</taxon>
        <taxon>Ditrysia</taxon>
        <taxon>Bombycoidea</taxon>
        <taxon>Sphingidae</taxon>
        <taxon>Sphinginae</taxon>
        <taxon>Sphingini</taxon>
        <taxon>Manduca</taxon>
    </lineage>
</organism>
<dbReference type="PIR" id="JS0645">
    <property type="entry name" value="JS0645"/>
</dbReference>
<dbReference type="SMR" id="P24858"/>
<dbReference type="GO" id="GO:0005576">
    <property type="term" value="C:extracellular region"/>
    <property type="evidence" value="ECO:0007669"/>
    <property type="project" value="UniProtKB-SubCell"/>
</dbReference>
<dbReference type="GO" id="GO:0005179">
    <property type="term" value="F:hormone activity"/>
    <property type="evidence" value="ECO:0007669"/>
    <property type="project" value="UniProtKB-KW"/>
</dbReference>
<dbReference type="InterPro" id="IPR000187">
    <property type="entry name" value="CRF"/>
</dbReference>
<dbReference type="SMART" id="SM00039">
    <property type="entry name" value="CRF"/>
    <property type="match status" value="1"/>
</dbReference>
<feature type="peptide" id="PRO_0000043597" description="Diuretic hormone 2">
    <location>
        <begin position="1"/>
        <end position="30"/>
    </location>
</feature>
<feature type="modified residue" description="Valine amide" evidence="2">
    <location>
        <position position="30"/>
    </location>
</feature>
<keyword id="KW-0027">Amidation</keyword>
<keyword id="KW-0903">Direct protein sequencing</keyword>
<keyword id="KW-0372">Hormone</keyword>
<keyword id="KW-0964">Secreted</keyword>
<reference key="1">
    <citation type="journal article" date="1991" name="Biochem. Biophys. Res. Commun.">
        <title>Isolation and identification of a new diuretic peptide from the tobacco hornworm, Manduca sexta.</title>
        <authorList>
            <person name="Blackburn M.B."/>
            <person name="Kingan T.G."/>
            <person name="Bodnar W."/>
            <person name="Shabanowitz J."/>
            <person name="Hunt D.F."/>
            <person name="Kempe T."/>
            <person name="Wagner R.M."/>
            <person name="Raina A.K."/>
            <person name="Schnee M.E."/>
            <person name="Ma M.C."/>
        </authorList>
    </citation>
    <scope>PROTEIN SEQUENCE</scope>
    <scope>FUNCTION</scope>
    <scope>SUBCELLULAR LOCATION</scope>
    <scope>AMIDATION AT VAL-30</scope>
    <source>
        <tissue>Corpora cardiaca</tissue>
    </source>
</reference>
<reference key="2">
    <citation type="journal article" date="2000" name="Gen. Comp. Endocrinol.">
        <title>Effects of Manduca diuresin on neonates of the tobacco hornworm, Manduca sexta.</title>
        <authorList>
            <person name="Ma M."/>
            <person name="Emery S.B."/>
            <person name="Wong W.K."/>
            <person name="De Loof A."/>
        </authorList>
    </citation>
    <scope>POSSIBLE ROLE IN PLANT PROTECTION</scope>
</reference>
<sequence length="30" mass="3561">SFSVNPAVDILQHRYMEKVAQNNRNFLNRV</sequence>
<name>DIUH2_MANSE</name>
<protein>
    <recommendedName>
        <fullName>Diuretic hormone 2</fullName>
        <shortName>DH-2</shortName>
    </recommendedName>
    <alternativeName>
        <fullName>DPII</fullName>
    </alternativeName>
    <alternativeName>
        <fullName evidence="3">Diuresin</fullName>
        <shortName evidence="3">MD</shortName>
    </alternativeName>
    <alternativeName>
        <fullName>Diuretic peptide 2</fullName>
        <shortName>DP-2</shortName>
    </alternativeName>
</protein>